<comment type="function">
    <text evidence="1">Multifunctional enzyme that catalyzes the SAM-dependent methylations of uroporphyrinogen III at position C-2 and C-7 to form precorrin-2 via precorrin-1. Then it catalyzes the NAD-dependent ring dehydrogenation of precorrin-2 to yield sirohydrochlorin. Finally, it catalyzes the ferrochelation of sirohydrochlorin to yield siroheme.</text>
</comment>
<comment type="catalytic activity">
    <reaction evidence="1">
        <text>uroporphyrinogen III + 2 S-adenosyl-L-methionine = precorrin-2 + 2 S-adenosyl-L-homocysteine + H(+)</text>
        <dbReference type="Rhea" id="RHEA:32459"/>
        <dbReference type="ChEBI" id="CHEBI:15378"/>
        <dbReference type="ChEBI" id="CHEBI:57308"/>
        <dbReference type="ChEBI" id="CHEBI:57856"/>
        <dbReference type="ChEBI" id="CHEBI:58827"/>
        <dbReference type="ChEBI" id="CHEBI:59789"/>
        <dbReference type="EC" id="2.1.1.107"/>
    </reaction>
</comment>
<comment type="catalytic activity">
    <reaction evidence="1">
        <text>precorrin-2 + NAD(+) = sirohydrochlorin + NADH + 2 H(+)</text>
        <dbReference type="Rhea" id="RHEA:15613"/>
        <dbReference type="ChEBI" id="CHEBI:15378"/>
        <dbReference type="ChEBI" id="CHEBI:57540"/>
        <dbReference type="ChEBI" id="CHEBI:57945"/>
        <dbReference type="ChEBI" id="CHEBI:58351"/>
        <dbReference type="ChEBI" id="CHEBI:58827"/>
        <dbReference type="EC" id="1.3.1.76"/>
    </reaction>
</comment>
<comment type="catalytic activity">
    <reaction evidence="1">
        <text>siroheme + 2 H(+) = sirohydrochlorin + Fe(2+)</text>
        <dbReference type="Rhea" id="RHEA:24360"/>
        <dbReference type="ChEBI" id="CHEBI:15378"/>
        <dbReference type="ChEBI" id="CHEBI:29033"/>
        <dbReference type="ChEBI" id="CHEBI:58351"/>
        <dbReference type="ChEBI" id="CHEBI:60052"/>
        <dbReference type="EC" id="4.99.1.4"/>
    </reaction>
</comment>
<comment type="pathway">
    <text evidence="1">Cofactor biosynthesis; adenosylcobalamin biosynthesis; precorrin-2 from uroporphyrinogen III: step 1/1.</text>
</comment>
<comment type="pathway">
    <text evidence="1">Cofactor biosynthesis; adenosylcobalamin biosynthesis; sirohydrochlorin from precorrin-2: step 1/1.</text>
</comment>
<comment type="pathway">
    <text evidence="1">Porphyrin-containing compound metabolism; siroheme biosynthesis; precorrin-2 from uroporphyrinogen III: step 1/1.</text>
</comment>
<comment type="pathway">
    <text evidence="1">Porphyrin-containing compound metabolism; siroheme biosynthesis; siroheme from sirohydrochlorin: step 1/1.</text>
</comment>
<comment type="pathway">
    <text evidence="1">Porphyrin-containing compound metabolism; siroheme biosynthesis; sirohydrochlorin from precorrin-2: step 1/1.</text>
</comment>
<comment type="similarity">
    <text evidence="1">In the N-terminal section; belongs to the precorrin-2 dehydrogenase / sirohydrochlorin ferrochelatase family.</text>
</comment>
<comment type="similarity">
    <text evidence="1">In the C-terminal section; belongs to the precorrin methyltransferase family.</text>
</comment>
<keyword id="KW-0169">Cobalamin biosynthesis</keyword>
<keyword id="KW-0456">Lyase</keyword>
<keyword id="KW-0489">Methyltransferase</keyword>
<keyword id="KW-0511">Multifunctional enzyme</keyword>
<keyword id="KW-0520">NAD</keyword>
<keyword id="KW-0560">Oxidoreductase</keyword>
<keyword id="KW-0597">Phosphoprotein</keyword>
<keyword id="KW-0627">Porphyrin biosynthesis</keyword>
<keyword id="KW-0949">S-adenosyl-L-methionine</keyword>
<keyword id="KW-0808">Transferase</keyword>
<reference key="1">
    <citation type="journal article" date="2008" name="DNA Res.">
        <title>Complete genome sequence and comparative analysis of the wild-type commensal Escherichia coli strain SE11 isolated from a healthy adult.</title>
        <authorList>
            <person name="Oshima K."/>
            <person name="Toh H."/>
            <person name="Ogura Y."/>
            <person name="Sasamoto H."/>
            <person name="Morita H."/>
            <person name="Park S.-H."/>
            <person name="Ooka T."/>
            <person name="Iyoda S."/>
            <person name="Taylor T.D."/>
            <person name="Hayashi T."/>
            <person name="Itoh K."/>
            <person name="Hattori M."/>
        </authorList>
    </citation>
    <scope>NUCLEOTIDE SEQUENCE [LARGE SCALE GENOMIC DNA]</scope>
    <source>
        <strain>SE11</strain>
    </source>
</reference>
<dbReference type="EC" id="2.1.1.107" evidence="1"/>
<dbReference type="EC" id="1.3.1.76" evidence="1"/>
<dbReference type="EC" id="4.99.1.4" evidence="1"/>
<dbReference type="EMBL" id="AP009240">
    <property type="protein sequence ID" value="BAG79154.1"/>
    <property type="molecule type" value="Genomic_DNA"/>
</dbReference>
<dbReference type="RefSeq" id="WP_000349863.1">
    <property type="nucleotide sequence ID" value="NC_011415.1"/>
</dbReference>
<dbReference type="SMR" id="B6I2S7"/>
<dbReference type="GeneID" id="75206312"/>
<dbReference type="KEGG" id="ecy:ECSE_3630"/>
<dbReference type="HOGENOM" id="CLU_011276_2_0_6"/>
<dbReference type="UniPathway" id="UPA00148">
    <property type="reaction ID" value="UER00211"/>
</dbReference>
<dbReference type="UniPathway" id="UPA00148">
    <property type="reaction ID" value="UER00222"/>
</dbReference>
<dbReference type="UniPathway" id="UPA00262">
    <property type="reaction ID" value="UER00211"/>
</dbReference>
<dbReference type="UniPathway" id="UPA00262">
    <property type="reaction ID" value="UER00222"/>
</dbReference>
<dbReference type="UniPathway" id="UPA00262">
    <property type="reaction ID" value="UER00376"/>
</dbReference>
<dbReference type="Proteomes" id="UP000008199">
    <property type="component" value="Chromosome"/>
</dbReference>
<dbReference type="GO" id="GO:0051287">
    <property type="term" value="F:NAD binding"/>
    <property type="evidence" value="ECO:0007669"/>
    <property type="project" value="InterPro"/>
</dbReference>
<dbReference type="GO" id="GO:0043115">
    <property type="term" value="F:precorrin-2 dehydrogenase activity"/>
    <property type="evidence" value="ECO:0007669"/>
    <property type="project" value="UniProtKB-UniRule"/>
</dbReference>
<dbReference type="GO" id="GO:0051266">
    <property type="term" value="F:sirohydrochlorin ferrochelatase activity"/>
    <property type="evidence" value="ECO:0007669"/>
    <property type="project" value="UniProtKB-EC"/>
</dbReference>
<dbReference type="GO" id="GO:0004851">
    <property type="term" value="F:uroporphyrin-III C-methyltransferase activity"/>
    <property type="evidence" value="ECO:0007669"/>
    <property type="project" value="UniProtKB-UniRule"/>
</dbReference>
<dbReference type="GO" id="GO:0009236">
    <property type="term" value="P:cobalamin biosynthetic process"/>
    <property type="evidence" value="ECO:0007669"/>
    <property type="project" value="UniProtKB-UniRule"/>
</dbReference>
<dbReference type="GO" id="GO:0032259">
    <property type="term" value="P:methylation"/>
    <property type="evidence" value="ECO:0007669"/>
    <property type="project" value="UniProtKB-KW"/>
</dbReference>
<dbReference type="GO" id="GO:0019354">
    <property type="term" value="P:siroheme biosynthetic process"/>
    <property type="evidence" value="ECO:0007669"/>
    <property type="project" value="UniProtKB-UniRule"/>
</dbReference>
<dbReference type="CDD" id="cd11642">
    <property type="entry name" value="SUMT"/>
    <property type="match status" value="1"/>
</dbReference>
<dbReference type="FunFam" id="1.10.8.210:FF:000001">
    <property type="entry name" value="Siroheme synthase"/>
    <property type="match status" value="1"/>
</dbReference>
<dbReference type="FunFam" id="3.30.160.110:FF:000001">
    <property type="entry name" value="Siroheme synthase"/>
    <property type="match status" value="1"/>
</dbReference>
<dbReference type="FunFam" id="3.30.950.10:FF:000001">
    <property type="entry name" value="Siroheme synthase"/>
    <property type="match status" value="1"/>
</dbReference>
<dbReference type="FunFam" id="3.40.1010.10:FF:000001">
    <property type="entry name" value="Siroheme synthase"/>
    <property type="match status" value="1"/>
</dbReference>
<dbReference type="FunFam" id="3.40.50.720:FF:000092">
    <property type="entry name" value="Siroheme synthase"/>
    <property type="match status" value="1"/>
</dbReference>
<dbReference type="Gene3D" id="3.40.1010.10">
    <property type="entry name" value="Cobalt-precorrin-4 Transmethylase, Domain 1"/>
    <property type="match status" value="1"/>
</dbReference>
<dbReference type="Gene3D" id="3.30.950.10">
    <property type="entry name" value="Methyltransferase, Cobalt-precorrin-4 Transmethylase, Domain 2"/>
    <property type="match status" value="1"/>
</dbReference>
<dbReference type="Gene3D" id="3.40.50.720">
    <property type="entry name" value="NAD(P)-binding Rossmann-like Domain"/>
    <property type="match status" value="1"/>
</dbReference>
<dbReference type="Gene3D" id="1.10.8.210">
    <property type="entry name" value="Sirohaem synthase, dimerisation domain"/>
    <property type="match status" value="1"/>
</dbReference>
<dbReference type="Gene3D" id="3.30.160.110">
    <property type="entry name" value="Siroheme synthase, domain 2"/>
    <property type="match status" value="1"/>
</dbReference>
<dbReference type="HAMAP" id="MF_01646">
    <property type="entry name" value="Siroheme_synth"/>
    <property type="match status" value="1"/>
</dbReference>
<dbReference type="InterPro" id="IPR000878">
    <property type="entry name" value="4pyrrol_Mease"/>
</dbReference>
<dbReference type="InterPro" id="IPR035996">
    <property type="entry name" value="4pyrrol_Methylase_sf"/>
</dbReference>
<dbReference type="InterPro" id="IPR014777">
    <property type="entry name" value="4pyrrole_Mease_sub1"/>
</dbReference>
<dbReference type="InterPro" id="IPR014776">
    <property type="entry name" value="4pyrrole_Mease_sub2"/>
</dbReference>
<dbReference type="InterPro" id="IPR006366">
    <property type="entry name" value="CobA/CysG_C"/>
</dbReference>
<dbReference type="InterPro" id="IPR036291">
    <property type="entry name" value="NAD(P)-bd_dom_sf"/>
</dbReference>
<dbReference type="InterPro" id="IPR050161">
    <property type="entry name" value="Siro_Cobalamin_biosynth"/>
</dbReference>
<dbReference type="InterPro" id="IPR037115">
    <property type="entry name" value="Sirohaem_synt_dimer_dom_sf"/>
</dbReference>
<dbReference type="InterPro" id="IPR012409">
    <property type="entry name" value="Sirohaem_synth"/>
</dbReference>
<dbReference type="InterPro" id="IPR028281">
    <property type="entry name" value="Sirohaem_synthase_central"/>
</dbReference>
<dbReference type="InterPro" id="IPR019478">
    <property type="entry name" value="Sirohaem_synthase_dimer_dom"/>
</dbReference>
<dbReference type="InterPro" id="IPR006367">
    <property type="entry name" value="Sirohaem_synthase_N"/>
</dbReference>
<dbReference type="InterPro" id="IPR003043">
    <property type="entry name" value="Uropor_MeTrfase_CS"/>
</dbReference>
<dbReference type="NCBIfam" id="TIGR01469">
    <property type="entry name" value="cobA_cysG_Cterm"/>
    <property type="match status" value="1"/>
</dbReference>
<dbReference type="NCBIfam" id="TIGR01470">
    <property type="entry name" value="cysG_Nterm"/>
    <property type="match status" value="1"/>
</dbReference>
<dbReference type="NCBIfam" id="NF004790">
    <property type="entry name" value="PRK06136.1"/>
    <property type="match status" value="1"/>
</dbReference>
<dbReference type="NCBIfam" id="NF007922">
    <property type="entry name" value="PRK10637.1"/>
    <property type="match status" value="1"/>
</dbReference>
<dbReference type="PANTHER" id="PTHR45790:SF1">
    <property type="entry name" value="SIROHEME SYNTHASE"/>
    <property type="match status" value="1"/>
</dbReference>
<dbReference type="PANTHER" id="PTHR45790">
    <property type="entry name" value="SIROHEME SYNTHASE-RELATED"/>
    <property type="match status" value="1"/>
</dbReference>
<dbReference type="Pfam" id="PF10414">
    <property type="entry name" value="CysG_dimeriser"/>
    <property type="match status" value="1"/>
</dbReference>
<dbReference type="Pfam" id="PF13241">
    <property type="entry name" value="NAD_binding_7"/>
    <property type="match status" value="1"/>
</dbReference>
<dbReference type="Pfam" id="PF14824">
    <property type="entry name" value="Sirohm_synth_M"/>
    <property type="match status" value="1"/>
</dbReference>
<dbReference type="Pfam" id="PF00590">
    <property type="entry name" value="TP_methylase"/>
    <property type="match status" value="1"/>
</dbReference>
<dbReference type="PIRSF" id="PIRSF036426">
    <property type="entry name" value="Sirohaem_synth"/>
    <property type="match status" value="1"/>
</dbReference>
<dbReference type="SUPFAM" id="SSF51735">
    <property type="entry name" value="NAD(P)-binding Rossmann-fold domains"/>
    <property type="match status" value="1"/>
</dbReference>
<dbReference type="SUPFAM" id="SSF75615">
    <property type="entry name" value="Siroheme synthase middle domains-like"/>
    <property type="match status" value="1"/>
</dbReference>
<dbReference type="SUPFAM" id="SSF53790">
    <property type="entry name" value="Tetrapyrrole methylase"/>
    <property type="match status" value="1"/>
</dbReference>
<dbReference type="PROSITE" id="PS00839">
    <property type="entry name" value="SUMT_1"/>
    <property type="match status" value="1"/>
</dbReference>
<dbReference type="PROSITE" id="PS00840">
    <property type="entry name" value="SUMT_2"/>
    <property type="match status" value="1"/>
</dbReference>
<proteinExistence type="inferred from homology"/>
<feature type="chain" id="PRO_1000186945" description="Siroheme synthase">
    <location>
        <begin position="1"/>
        <end position="457"/>
    </location>
</feature>
<feature type="region of interest" description="Precorrin-2 dehydrogenase /sirohydrochlorin ferrochelatase" evidence="1">
    <location>
        <begin position="1"/>
        <end position="204"/>
    </location>
</feature>
<feature type="region of interest" description="Uroporphyrinogen-III C-methyltransferase" evidence="1">
    <location>
        <begin position="216"/>
        <end position="457"/>
    </location>
</feature>
<feature type="active site" description="Proton acceptor" evidence="1">
    <location>
        <position position="248"/>
    </location>
</feature>
<feature type="active site" description="Proton donor" evidence="1">
    <location>
        <position position="270"/>
    </location>
</feature>
<feature type="binding site" evidence="1">
    <location>
        <begin position="22"/>
        <end position="23"/>
    </location>
    <ligand>
        <name>NAD(+)</name>
        <dbReference type="ChEBI" id="CHEBI:57540"/>
    </ligand>
</feature>
<feature type="binding site" evidence="1">
    <location>
        <begin position="43"/>
        <end position="44"/>
    </location>
    <ligand>
        <name>NAD(+)</name>
        <dbReference type="ChEBI" id="CHEBI:57540"/>
    </ligand>
</feature>
<feature type="binding site" evidence="1">
    <location>
        <position position="225"/>
    </location>
    <ligand>
        <name>S-adenosyl-L-methionine</name>
        <dbReference type="ChEBI" id="CHEBI:59789"/>
    </ligand>
</feature>
<feature type="binding site" evidence="1">
    <location>
        <begin position="301"/>
        <end position="303"/>
    </location>
    <ligand>
        <name>S-adenosyl-L-methionine</name>
        <dbReference type="ChEBI" id="CHEBI:59789"/>
    </ligand>
</feature>
<feature type="binding site" evidence="1">
    <location>
        <position position="306"/>
    </location>
    <ligand>
        <name>S-adenosyl-L-methionine</name>
        <dbReference type="ChEBI" id="CHEBI:59789"/>
    </ligand>
</feature>
<feature type="binding site" evidence="1">
    <location>
        <begin position="331"/>
        <end position="332"/>
    </location>
    <ligand>
        <name>S-adenosyl-L-methionine</name>
        <dbReference type="ChEBI" id="CHEBI:59789"/>
    </ligand>
</feature>
<feature type="binding site" evidence="1">
    <location>
        <position position="382"/>
    </location>
    <ligand>
        <name>S-adenosyl-L-methionine</name>
        <dbReference type="ChEBI" id="CHEBI:59789"/>
    </ligand>
</feature>
<feature type="binding site" evidence="1">
    <location>
        <position position="411"/>
    </location>
    <ligand>
        <name>S-adenosyl-L-methionine</name>
        <dbReference type="ChEBI" id="CHEBI:59789"/>
    </ligand>
</feature>
<feature type="modified residue" description="Phosphoserine" evidence="1">
    <location>
        <position position="128"/>
    </location>
</feature>
<accession>B6I2S7</accession>
<organism>
    <name type="scientific">Escherichia coli (strain SE11)</name>
    <dbReference type="NCBI Taxonomy" id="409438"/>
    <lineage>
        <taxon>Bacteria</taxon>
        <taxon>Pseudomonadati</taxon>
        <taxon>Pseudomonadota</taxon>
        <taxon>Gammaproteobacteria</taxon>
        <taxon>Enterobacterales</taxon>
        <taxon>Enterobacteriaceae</taxon>
        <taxon>Escherichia</taxon>
    </lineage>
</organism>
<sequence>MDHLPIFCQLRDRDCLIVGGGDVAERKARLLLDAGARLTVNALAFIPQFTAWADAGMLTLVEGPFDESLLDTCWLAIAATDDDALNQRVSEAAEARRIFCNVVDAPKAASFIMPSIIDRSPLMVAVSSGGTSPVLARLLREKLESLLPLHLGQVAKYAGQLRGRVKQQFATMSERRRFWEKLFVNDRLAQSLANNDQKAITETTEQLINEPLDHRGEVVLVGAGPGDAGLLTLKGLQQIQQADVVVYDRLVSDDIMNLVRRDADRVFVGKRAGYHCVPQEEINQILLREAQKGKRVVRLKGGDPFIFGRGGEELETLCNAGIPFSVVPGITAASGCSAYSGIPLTHRDYAQSVRLITGHLKTGGELDWENLAAEKQTLVFYMGLNQAATIQQKLIEHGMPGEMPVAIVENGTAVTQRVIDGTLTQLGELAQQMNSPSLIIIGRVVGLRDKLNWFSNH</sequence>
<evidence type="ECO:0000255" key="1">
    <source>
        <dbReference type="HAMAP-Rule" id="MF_01646"/>
    </source>
</evidence>
<protein>
    <recommendedName>
        <fullName evidence="1">Siroheme synthase</fullName>
    </recommendedName>
    <domain>
        <recommendedName>
            <fullName evidence="1">Uroporphyrinogen-III C-methyltransferase</fullName>
            <shortName evidence="1">Urogen III methylase</shortName>
            <ecNumber evidence="1">2.1.1.107</ecNumber>
        </recommendedName>
        <alternativeName>
            <fullName evidence="1">SUMT</fullName>
        </alternativeName>
        <alternativeName>
            <fullName evidence="1">Uroporphyrinogen III methylase</fullName>
            <shortName evidence="1">UROM</shortName>
        </alternativeName>
    </domain>
    <domain>
        <recommendedName>
            <fullName evidence="1">Precorrin-2 dehydrogenase</fullName>
            <ecNumber evidence="1">1.3.1.76</ecNumber>
        </recommendedName>
    </domain>
    <domain>
        <recommendedName>
            <fullName evidence="1">Sirohydrochlorin ferrochelatase</fullName>
            <ecNumber evidence="1">4.99.1.4</ecNumber>
        </recommendedName>
    </domain>
</protein>
<name>CYSG_ECOSE</name>
<gene>
    <name evidence="1" type="primary">cysG</name>
    <name type="ordered locus">ECSE_3630</name>
</gene>